<gene>
    <name type="primary">ccdC</name>
    <name type="synonym">yneJ</name>
    <name type="synonym">yoxI</name>
    <name type="ordered locus">BSU17950</name>
</gene>
<evidence type="ECO:0000255" key="1"/>
<evidence type="ECO:0000305" key="2"/>
<organism>
    <name type="scientific">Bacillus subtilis (strain 168)</name>
    <dbReference type="NCBI Taxonomy" id="224308"/>
    <lineage>
        <taxon>Bacteria</taxon>
        <taxon>Bacillati</taxon>
        <taxon>Bacillota</taxon>
        <taxon>Bacilli</taxon>
        <taxon>Bacillales</taxon>
        <taxon>Bacillaceae</taxon>
        <taxon>Bacillus</taxon>
    </lineage>
</organism>
<feature type="chain" id="PRO_0000089412" description="Protein CcdC">
    <location>
        <begin position="1"/>
        <end position="160"/>
    </location>
</feature>
<feature type="transmembrane region" description="Helical" evidence="1">
    <location>
        <begin position="2"/>
        <end position="22"/>
    </location>
</feature>
<feature type="transmembrane region" description="Helical" evidence="1">
    <location>
        <begin position="34"/>
        <end position="54"/>
    </location>
</feature>
<feature type="transmembrane region" description="Helical" evidence="1">
    <location>
        <begin position="55"/>
        <end position="75"/>
    </location>
</feature>
<feature type="transmembrane region" description="Helical" evidence="1">
    <location>
        <begin position="94"/>
        <end position="114"/>
    </location>
</feature>
<feature type="transmembrane region" description="Helical" evidence="1">
    <location>
        <begin position="117"/>
        <end position="137"/>
    </location>
</feature>
<keyword id="KW-1003">Cell membrane</keyword>
<keyword id="KW-0472">Membrane</keyword>
<keyword id="KW-1185">Reference proteome</keyword>
<keyword id="KW-0812">Transmembrane</keyword>
<keyword id="KW-1133">Transmembrane helix</keyword>
<accession>P45710</accession>
<comment type="subcellular location">
    <subcellularLocation>
        <location evidence="2">Cell membrane</location>
        <topology evidence="2">Multi-pass membrane protein</topology>
    </subcellularLocation>
</comment>
<comment type="sequence caution" evidence="2">
    <conflict type="erroneous initiation">
        <sequence resource="EMBL-CDS" id="CAA97596"/>
    </conflict>
</comment>
<comment type="sequence caution" evidence="2">
    <conflict type="erroneous initiation">
        <sequence resource="EMBL-CDS" id="CAB13679"/>
    </conflict>
</comment>
<protein>
    <recommendedName>
        <fullName>Protein CcdC</fullName>
    </recommendedName>
</protein>
<proteinExistence type="predicted"/>
<name>CCDC_BACSU</name>
<sequence>MMIIVSSIIAVLMAVAVMVVRIKSSDKPVSPKKIILPPIFMSTGALMFLFPVFWVTGAEFLEAFTLGVIFSIFLIKTSKFEIKNNEIYMKRSKAFVFILVGLLVIRIVMKSILSTSIDYGALSGMFWILAFGMIVPWRIAMYLSYRKLHNELQSSNIQMN</sequence>
<dbReference type="EMBL" id="X87845">
    <property type="protein sequence ID" value="CAA61118.1"/>
    <property type="molecule type" value="Genomic_DNA"/>
</dbReference>
<dbReference type="EMBL" id="Z73234">
    <property type="protein sequence ID" value="CAA97596.1"/>
    <property type="status" value="ALT_INIT"/>
    <property type="molecule type" value="Genomic_DNA"/>
</dbReference>
<dbReference type="EMBL" id="AL009126">
    <property type="protein sequence ID" value="CAB13679.1"/>
    <property type="status" value="ALT_INIT"/>
    <property type="molecule type" value="Genomic_DNA"/>
</dbReference>
<dbReference type="PIR" id="C69891">
    <property type="entry name" value="C69891"/>
</dbReference>
<dbReference type="RefSeq" id="NP_389678.1">
    <property type="nucleotide sequence ID" value="NC_000964.3"/>
</dbReference>
<dbReference type="FunCoup" id="P45710">
    <property type="interactions" value="21"/>
</dbReference>
<dbReference type="STRING" id="224308.BSU17950"/>
<dbReference type="PaxDb" id="224308-BSU17950"/>
<dbReference type="EnsemblBacteria" id="CAB13679">
    <property type="protein sequence ID" value="CAB13679"/>
    <property type="gene ID" value="BSU_17950"/>
</dbReference>
<dbReference type="GeneID" id="938604"/>
<dbReference type="KEGG" id="bsu:BSU17950"/>
<dbReference type="PATRIC" id="fig|224308.179.peg.1956"/>
<dbReference type="eggNOG" id="COG4846">
    <property type="taxonomic scope" value="Bacteria"/>
</dbReference>
<dbReference type="InParanoid" id="P45710"/>
<dbReference type="OrthoDB" id="120091at2"/>
<dbReference type="BioCyc" id="BSUB:BSU17950-MONOMER"/>
<dbReference type="Proteomes" id="UP000001570">
    <property type="component" value="Chromosome"/>
</dbReference>
<dbReference type="GO" id="GO:0005886">
    <property type="term" value="C:plasma membrane"/>
    <property type="evidence" value="ECO:0007669"/>
    <property type="project" value="UniProtKB-SubCell"/>
</dbReference>
<dbReference type="InterPro" id="IPR031306">
    <property type="entry name" value="CcdC"/>
</dbReference>
<dbReference type="PANTHER" id="PTHR39164">
    <property type="entry name" value="PROTEIN CCDC"/>
    <property type="match status" value="1"/>
</dbReference>
<dbReference type="PANTHER" id="PTHR39164:SF1">
    <property type="entry name" value="PROTEIN CCDC"/>
    <property type="match status" value="1"/>
</dbReference>
<dbReference type="Pfam" id="PF07301">
    <property type="entry name" value="DUF1453"/>
    <property type="match status" value="1"/>
</dbReference>
<dbReference type="PIRSF" id="PIRSF021441">
    <property type="entry name" value="DUF1453"/>
    <property type="match status" value="1"/>
</dbReference>
<reference key="1">
    <citation type="journal article" date="1997" name="J. Bacteriol.">
        <title>Identification and characterization of the ccdA gene, required for cytochrome c synthesis in Bacillus subtilis.</title>
        <authorList>
            <person name="Schioett T."/>
            <person name="von Wachenfeldt C."/>
            <person name="Hederstedt L."/>
        </authorList>
    </citation>
    <scope>NUCLEOTIDE SEQUENCE [GENOMIC DNA]</scope>
    <source>
        <strain>168</strain>
    </source>
</reference>
<reference key="2">
    <citation type="journal article" date="1996" name="Microbiology">
        <title>New genes in the 170 degrees region of the Bacillus subtilis genome encode DNA gyrase subunits, a thioredoxin, a xylanase and an amino acid transporter.</title>
        <authorList>
            <person name="Rose M."/>
            <person name="Entian K.-D."/>
        </authorList>
    </citation>
    <scope>NUCLEOTIDE SEQUENCE [GENOMIC DNA]</scope>
    <source>
        <strain>168</strain>
    </source>
</reference>
<reference key="3">
    <citation type="journal article" date="1997" name="Nature">
        <title>The complete genome sequence of the Gram-positive bacterium Bacillus subtilis.</title>
        <authorList>
            <person name="Kunst F."/>
            <person name="Ogasawara N."/>
            <person name="Moszer I."/>
            <person name="Albertini A.M."/>
            <person name="Alloni G."/>
            <person name="Azevedo V."/>
            <person name="Bertero M.G."/>
            <person name="Bessieres P."/>
            <person name="Bolotin A."/>
            <person name="Borchert S."/>
            <person name="Borriss R."/>
            <person name="Boursier L."/>
            <person name="Brans A."/>
            <person name="Braun M."/>
            <person name="Brignell S.C."/>
            <person name="Bron S."/>
            <person name="Brouillet S."/>
            <person name="Bruschi C.V."/>
            <person name="Caldwell B."/>
            <person name="Capuano V."/>
            <person name="Carter N.M."/>
            <person name="Choi S.-K."/>
            <person name="Codani J.-J."/>
            <person name="Connerton I.F."/>
            <person name="Cummings N.J."/>
            <person name="Daniel R.A."/>
            <person name="Denizot F."/>
            <person name="Devine K.M."/>
            <person name="Duesterhoeft A."/>
            <person name="Ehrlich S.D."/>
            <person name="Emmerson P.T."/>
            <person name="Entian K.-D."/>
            <person name="Errington J."/>
            <person name="Fabret C."/>
            <person name="Ferrari E."/>
            <person name="Foulger D."/>
            <person name="Fritz C."/>
            <person name="Fujita M."/>
            <person name="Fujita Y."/>
            <person name="Fuma S."/>
            <person name="Galizzi A."/>
            <person name="Galleron N."/>
            <person name="Ghim S.-Y."/>
            <person name="Glaser P."/>
            <person name="Goffeau A."/>
            <person name="Golightly E.J."/>
            <person name="Grandi G."/>
            <person name="Guiseppi G."/>
            <person name="Guy B.J."/>
            <person name="Haga K."/>
            <person name="Haiech J."/>
            <person name="Harwood C.R."/>
            <person name="Henaut A."/>
            <person name="Hilbert H."/>
            <person name="Holsappel S."/>
            <person name="Hosono S."/>
            <person name="Hullo M.-F."/>
            <person name="Itaya M."/>
            <person name="Jones L.-M."/>
            <person name="Joris B."/>
            <person name="Karamata D."/>
            <person name="Kasahara Y."/>
            <person name="Klaerr-Blanchard M."/>
            <person name="Klein C."/>
            <person name="Kobayashi Y."/>
            <person name="Koetter P."/>
            <person name="Koningstein G."/>
            <person name="Krogh S."/>
            <person name="Kumano M."/>
            <person name="Kurita K."/>
            <person name="Lapidus A."/>
            <person name="Lardinois S."/>
            <person name="Lauber J."/>
            <person name="Lazarevic V."/>
            <person name="Lee S.-M."/>
            <person name="Levine A."/>
            <person name="Liu H."/>
            <person name="Masuda S."/>
            <person name="Mauel C."/>
            <person name="Medigue C."/>
            <person name="Medina N."/>
            <person name="Mellado R.P."/>
            <person name="Mizuno M."/>
            <person name="Moestl D."/>
            <person name="Nakai S."/>
            <person name="Noback M."/>
            <person name="Noone D."/>
            <person name="O'Reilly M."/>
            <person name="Ogawa K."/>
            <person name="Ogiwara A."/>
            <person name="Oudega B."/>
            <person name="Park S.-H."/>
            <person name="Parro V."/>
            <person name="Pohl T.M."/>
            <person name="Portetelle D."/>
            <person name="Porwollik S."/>
            <person name="Prescott A.M."/>
            <person name="Presecan E."/>
            <person name="Pujic P."/>
            <person name="Purnelle B."/>
            <person name="Rapoport G."/>
            <person name="Rey M."/>
            <person name="Reynolds S."/>
            <person name="Rieger M."/>
            <person name="Rivolta C."/>
            <person name="Rocha E."/>
            <person name="Roche B."/>
            <person name="Rose M."/>
            <person name="Sadaie Y."/>
            <person name="Sato T."/>
            <person name="Scanlan E."/>
            <person name="Schleich S."/>
            <person name="Schroeter R."/>
            <person name="Scoffone F."/>
            <person name="Sekiguchi J."/>
            <person name="Sekowska A."/>
            <person name="Seror S.J."/>
            <person name="Serror P."/>
            <person name="Shin B.-S."/>
            <person name="Soldo B."/>
            <person name="Sorokin A."/>
            <person name="Tacconi E."/>
            <person name="Takagi T."/>
            <person name="Takahashi H."/>
            <person name="Takemaru K."/>
            <person name="Takeuchi M."/>
            <person name="Tamakoshi A."/>
            <person name="Tanaka T."/>
            <person name="Terpstra P."/>
            <person name="Tognoni A."/>
            <person name="Tosato V."/>
            <person name="Uchiyama S."/>
            <person name="Vandenbol M."/>
            <person name="Vannier F."/>
            <person name="Vassarotti A."/>
            <person name="Viari A."/>
            <person name="Wambutt R."/>
            <person name="Wedler E."/>
            <person name="Wedler H."/>
            <person name="Weitzenegger T."/>
            <person name="Winters P."/>
            <person name="Wipat A."/>
            <person name="Yamamoto H."/>
            <person name="Yamane K."/>
            <person name="Yasumoto K."/>
            <person name="Yata K."/>
            <person name="Yoshida K."/>
            <person name="Yoshikawa H.-F."/>
            <person name="Zumstein E."/>
            <person name="Yoshikawa H."/>
            <person name="Danchin A."/>
        </authorList>
    </citation>
    <scope>NUCLEOTIDE SEQUENCE [LARGE SCALE GENOMIC DNA]</scope>
    <source>
        <strain>168</strain>
    </source>
</reference>